<accession>Q8TF08</accession>
<accession>Q32Q40</accession>
<evidence type="ECO:0000250" key="1">
    <source>
        <dbReference type="UniProtKB" id="P13183"/>
    </source>
</evidence>
<evidence type="ECO:0000269" key="2">
    <source>
    </source>
</evidence>
<evidence type="ECO:0000305" key="3"/>
<dbReference type="EMBL" id="AF125109">
    <property type="protein sequence ID" value="AAL75946.1"/>
    <property type="status" value="ALT_INIT"/>
    <property type="molecule type" value="mRNA"/>
</dbReference>
<dbReference type="EMBL" id="BC035923">
    <property type="protein sequence ID" value="AAH35923.1"/>
    <property type="status" value="ALT_INIT"/>
    <property type="molecule type" value="mRNA"/>
</dbReference>
<dbReference type="EMBL" id="BC107855">
    <property type="protein sequence ID" value="AAI07856.1"/>
    <property type="status" value="ALT_INIT"/>
    <property type="molecule type" value="mRNA"/>
</dbReference>
<dbReference type="CCDS" id="CCDS3472.2"/>
<dbReference type="RefSeq" id="NP_570972.2">
    <property type="nucleotide sequence ID" value="NM_130902.3"/>
</dbReference>
<dbReference type="RefSeq" id="XP_005248113.1">
    <property type="nucleotide sequence ID" value="XM_005248056.5"/>
</dbReference>
<dbReference type="RefSeq" id="XP_011511932.1">
    <property type="nucleotide sequence ID" value="XM_011513630.3"/>
</dbReference>
<dbReference type="RefSeq" id="XP_011511933.1">
    <property type="nucleotide sequence ID" value="XM_011513631.3"/>
</dbReference>
<dbReference type="RefSeq" id="XP_011511934.1">
    <property type="nucleotide sequence ID" value="XM_011513632.3"/>
</dbReference>
<dbReference type="RefSeq" id="XP_011511935.1">
    <property type="nucleotide sequence ID" value="XM_011513633.3"/>
</dbReference>
<dbReference type="RefSeq" id="XP_011511936.1">
    <property type="nucleotide sequence ID" value="XM_011513634.3"/>
</dbReference>
<dbReference type="RefSeq" id="XP_011511937.1">
    <property type="nucleotide sequence ID" value="XM_011513635.3"/>
</dbReference>
<dbReference type="RefSeq" id="XP_011511938.1">
    <property type="nucleotide sequence ID" value="XM_011513636.1"/>
</dbReference>
<dbReference type="RefSeq" id="XP_011511939.1">
    <property type="nucleotide sequence ID" value="XM_011513637.2"/>
</dbReference>
<dbReference type="RefSeq" id="XP_011511940.1">
    <property type="nucleotide sequence ID" value="XM_011513638.3"/>
</dbReference>
<dbReference type="RefSeq" id="XP_047305676.1">
    <property type="nucleotide sequence ID" value="XM_047449720.1"/>
</dbReference>
<dbReference type="RefSeq" id="XP_047305677.1">
    <property type="nucleotide sequence ID" value="XM_047449721.1"/>
</dbReference>
<dbReference type="RefSeq" id="XP_054205108.1">
    <property type="nucleotide sequence ID" value="XM_054349133.1"/>
</dbReference>
<dbReference type="RefSeq" id="XP_054205109.1">
    <property type="nucleotide sequence ID" value="XM_054349134.1"/>
</dbReference>
<dbReference type="RefSeq" id="XP_054205110.1">
    <property type="nucleotide sequence ID" value="XM_054349135.1"/>
</dbReference>
<dbReference type="RefSeq" id="XP_054205111.1">
    <property type="nucleotide sequence ID" value="XM_054349136.1"/>
</dbReference>
<dbReference type="RefSeq" id="XP_054205112.1">
    <property type="nucleotide sequence ID" value="XM_054349137.1"/>
</dbReference>
<dbReference type="RefSeq" id="XP_054205113.1">
    <property type="nucleotide sequence ID" value="XM_054349138.1"/>
</dbReference>
<dbReference type="RefSeq" id="XP_054205114.1">
    <property type="nucleotide sequence ID" value="XM_054349139.1"/>
</dbReference>
<dbReference type="RefSeq" id="XP_054205115.1">
    <property type="nucleotide sequence ID" value="XM_054349140.1"/>
</dbReference>
<dbReference type="RefSeq" id="XP_054205116.1">
    <property type="nucleotide sequence ID" value="XM_054349141.1"/>
</dbReference>
<dbReference type="RefSeq" id="XP_054205117.1">
    <property type="nucleotide sequence ID" value="XM_054349142.1"/>
</dbReference>
<dbReference type="BioGRID" id="128085">
    <property type="interactions" value="11"/>
</dbReference>
<dbReference type="FunCoup" id="Q8TF08">
    <property type="interactions" value="190"/>
</dbReference>
<dbReference type="IntAct" id="Q8TF08">
    <property type="interactions" value="11"/>
</dbReference>
<dbReference type="STRING" id="9606.ENSP00000379784"/>
<dbReference type="TCDB" id="3.D.4.11.1">
    <property type="family name" value="the proton-translocating cytochrome oxidase (cox) superfamily"/>
</dbReference>
<dbReference type="iPTMnet" id="Q8TF08"/>
<dbReference type="PhosphoSitePlus" id="Q8TF08"/>
<dbReference type="BioMuta" id="COX7B2"/>
<dbReference type="DMDM" id="229462876"/>
<dbReference type="jPOST" id="Q8TF08"/>
<dbReference type="MassIVE" id="Q8TF08"/>
<dbReference type="PaxDb" id="9606-ENSP00000379784"/>
<dbReference type="PeptideAtlas" id="Q8TF08"/>
<dbReference type="ProteomicsDB" id="74534"/>
<dbReference type="Antibodypedia" id="55964">
    <property type="antibodies" value="39 antibodies from 15 providers"/>
</dbReference>
<dbReference type="DNASU" id="170712"/>
<dbReference type="Ensembl" id="ENST00000355591.8">
    <property type="protein sequence ID" value="ENSP00000347799.3"/>
    <property type="gene ID" value="ENSG00000170516.17"/>
</dbReference>
<dbReference type="Ensembl" id="ENST00000396533.5">
    <property type="protein sequence ID" value="ENSP00000379784.1"/>
    <property type="gene ID" value="ENSG00000170516.17"/>
</dbReference>
<dbReference type="GeneID" id="170712"/>
<dbReference type="KEGG" id="hsa:170712"/>
<dbReference type="MANE-Select" id="ENST00000355591.8">
    <property type="protein sequence ID" value="ENSP00000347799.3"/>
    <property type="RefSeq nucleotide sequence ID" value="NM_130902.3"/>
    <property type="RefSeq protein sequence ID" value="NP_570972.2"/>
</dbReference>
<dbReference type="UCSC" id="uc003gxf.4">
    <property type="organism name" value="human"/>
</dbReference>
<dbReference type="AGR" id="HGNC:24381"/>
<dbReference type="CTD" id="170712"/>
<dbReference type="GeneCards" id="COX7B2"/>
<dbReference type="HGNC" id="HGNC:24381">
    <property type="gene designation" value="COX7B2"/>
</dbReference>
<dbReference type="HPA" id="ENSG00000170516">
    <property type="expression patterns" value="Tissue enriched (testis)"/>
</dbReference>
<dbReference type="MalaCards" id="COX7B2"/>
<dbReference type="MIM" id="609811">
    <property type="type" value="gene"/>
</dbReference>
<dbReference type="neXtProt" id="NX_Q8TF08"/>
<dbReference type="OpenTargets" id="ENSG00000170516"/>
<dbReference type="PharmGKB" id="PA134885922"/>
<dbReference type="VEuPathDB" id="HostDB:ENSG00000170516"/>
<dbReference type="eggNOG" id="ENOG502S9DG">
    <property type="taxonomic scope" value="Eukaryota"/>
</dbReference>
<dbReference type="GeneTree" id="ENSGT00390000012178"/>
<dbReference type="InParanoid" id="Q8TF08"/>
<dbReference type="OMA" id="QIRARQS"/>
<dbReference type="OrthoDB" id="9937520at2759"/>
<dbReference type="PAN-GO" id="Q8TF08">
    <property type="GO annotations" value="2 GO annotations based on evolutionary models"/>
</dbReference>
<dbReference type="PhylomeDB" id="Q8TF08"/>
<dbReference type="TreeFam" id="TF105068"/>
<dbReference type="PathwayCommons" id="Q8TF08"/>
<dbReference type="UniPathway" id="UPA00705"/>
<dbReference type="BioGRID-ORCS" id="170712">
    <property type="hits" value="10 hits in 1149 CRISPR screens"/>
</dbReference>
<dbReference type="ChiTaRS" id="COX7B2">
    <property type="organism name" value="human"/>
</dbReference>
<dbReference type="GenomeRNAi" id="170712"/>
<dbReference type="Pharos" id="Q8TF08">
    <property type="development level" value="Tdark"/>
</dbReference>
<dbReference type="PRO" id="PR:Q8TF08"/>
<dbReference type="Proteomes" id="UP000005640">
    <property type="component" value="Chromosome 4"/>
</dbReference>
<dbReference type="RNAct" id="Q8TF08">
    <property type="molecule type" value="protein"/>
</dbReference>
<dbReference type="Bgee" id="ENSG00000170516">
    <property type="expression patterns" value="Expressed in right testis and 66 other cell types or tissues"/>
</dbReference>
<dbReference type="ExpressionAtlas" id="Q8TF08">
    <property type="expression patterns" value="baseline and differential"/>
</dbReference>
<dbReference type="GO" id="GO:0005743">
    <property type="term" value="C:mitochondrial inner membrane"/>
    <property type="evidence" value="ECO:0007669"/>
    <property type="project" value="UniProtKB-SubCell"/>
</dbReference>
<dbReference type="GO" id="GO:0005739">
    <property type="term" value="C:mitochondrion"/>
    <property type="evidence" value="ECO:0006056"/>
    <property type="project" value="FlyBase"/>
</dbReference>
<dbReference type="GO" id="GO:0045277">
    <property type="term" value="C:respiratory chain complex IV"/>
    <property type="evidence" value="ECO:0000318"/>
    <property type="project" value="GO_Central"/>
</dbReference>
<dbReference type="GO" id="GO:0006123">
    <property type="term" value="P:mitochondrial electron transport, cytochrome c to oxygen"/>
    <property type="evidence" value="ECO:0007669"/>
    <property type="project" value="InterPro"/>
</dbReference>
<dbReference type="GO" id="GO:0007283">
    <property type="term" value="P:spermatogenesis"/>
    <property type="evidence" value="ECO:0007669"/>
    <property type="project" value="Ensembl"/>
</dbReference>
<dbReference type="CDD" id="cd01403">
    <property type="entry name" value="Cyt_c_Oxidase_VIIb"/>
    <property type="match status" value="1"/>
</dbReference>
<dbReference type="FunFam" id="4.10.51.10:FF:000001">
    <property type="entry name" value="Cytochrome c oxidase subunit 7B, mitochondrial"/>
    <property type="match status" value="1"/>
</dbReference>
<dbReference type="Gene3D" id="4.10.51.10">
    <property type="entry name" value="Cytochrome C Oxidase, chain K"/>
    <property type="match status" value="1"/>
</dbReference>
<dbReference type="InterPro" id="IPR008433">
    <property type="entry name" value="Cyt_c_oxidase_suVIIB"/>
</dbReference>
<dbReference type="InterPro" id="IPR023272">
    <property type="entry name" value="Cyt_c_oxidase_suVIIB_dom_sf"/>
</dbReference>
<dbReference type="PANTHER" id="PTHR16716">
    <property type="entry name" value="CYTOCHROME C OXIDASE SUBUNIT 7B, MITOCHONDRIAL"/>
    <property type="match status" value="1"/>
</dbReference>
<dbReference type="PANTHER" id="PTHR16716:SF1">
    <property type="entry name" value="CYTOCHROME C OXIDASE SUBUNIT 7B2, MITOCHONDRIAL"/>
    <property type="match status" value="1"/>
</dbReference>
<dbReference type="Pfam" id="PF05392">
    <property type="entry name" value="COX7B"/>
    <property type="match status" value="1"/>
</dbReference>
<dbReference type="SUPFAM" id="SSF81423">
    <property type="entry name" value="Mitochondrial cytochrome c oxidase subunit VIIb"/>
    <property type="match status" value="1"/>
</dbReference>
<reference key="1">
    <citation type="submission" date="2002-02" db="EMBL/GenBank/DDBJ databases">
        <title>Cloning of a new human cDNA similar to Homo sapiens coxVIIb mRNA.</title>
        <authorList>
            <person name="Jin L."/>
            <person name="Yu L."/>
            <person name="Zhao S.Y."/>
        </authorList>
    </citation>
    <scope>NUCLEOTIDE SEQUENCE [MRNA]</scope>
</reference>
<reference key="2">
    <citation type="journal article" date="2004" name="Genome Res.">
        <title>The status, quality, and expansion of the NIH full-length cDNA project: the Mammalian Gene Collection (MGC).</title>
        <authorList>
            <consortium name="The MGC Project Team"/>
        </authorList>
    </citation>
    <scope>NUCLEOTIDE SEQUENCE [LARGE SCALE MRNA]</scope>
    <source>
        <tissue>Brain</tissue>
        <tissue>Skin</tissue>
    </source>
</reference>
<reference key="3">
    <citation type="journal article" date="2004" name="Sci. China, Ser. C, Life Sci.">
        <title>A rare polymorphism of the COX7B2 gene in a Cantonese family with nasopharyngeal carcinoma.</title>
        <authorList>
            <person name="Liang H."/>
            <person name="Chen H."/>
            <person name="Shen Y."/>
            <person name="Feng Q."/>
            <person name="Jin W."/>
            <person name="Huang W."/>
            <person name="Zeng Y."/>
        </authorList>
    </citation>
    <scope>VARIANT GLN-27</scope>
</reference>
<proteinExistence type="evidence at protein level"/>
<organism>
    <name type="scientific">Homo sapiens</name>
    <name type="common">Human</name>
    <dbReference type="NCBI Taxonomy" id="9606"/>
    <lineage>
        <taxon>Eukaryota</taxon>
        <taxon>Metazoa</taxon>
        <taxon>Chordata</taxon>
        <taxon>Craniata</taxon>
        <taxon>Vertebrata</taxon>
        <taxon>Euteleostomi</taxon>
        <taxon>Mammalia</taxon>
        <taxon>Eutheria</taxon>
        <taxon>Euarchontoglires</taxon>
        <taxon>Primates</taxon>
        <taxon>Haplorrhini</taxon>
        <taxon>Catarrhini</taxon>
        <taxon>Hominidae</taxon>
        <taxon>Homo</taxon>
    </lineage>
</organism>
<comment type="function">
    <text evidence="1">Component of the cytochrome c oxidase, the last enzyme in the mitochondrial electron transport chain which drives oxidative phosphorylation. The respiratory chain contains 3 multisubunit complexes succinate dehydrogenase (complex II, CII), ubiquinol-cytochrome c oxidoreductase (cytochrome b-c1 complex, complex III, CIII) and cytochrome c oxidase (complex IV, CIV), that cooperate to transfer electrons derived from NADH and succinate to molecular oxygen, creating an electrochemical gradient over the inner membrane that drives transmembrane transport and the ATP synthase. Cytochrome c oxidase is the component of the respiratory chain that catalyzes the reduction of oxygen to water. Electrons originating from reduced cytochrome c in the intermembrane space (IMS) are transferred via the dinuclear copper A center (CU(A)) of subunit 2 and heme A of subunit 1 to the active site in subunit 1, a binuclear center (BNC) formed by heme A3 and copper B (CU(B)). The BNC reduces molecular oxygen to 2 water molecules using 4 electrons from cytochrome c in the IMS and 4 protons from the mitochondrial matrix.</text>
</comment>
<comment type="pathway">
    <text evidence="1">Energy metabolism; oxidative phosphorylation.</text>
</comment>
<comment type="subunit">
    <text evidence="1">Component of the cytochrome c oxidase (complex IV, CIV), a multisubunit enzyme composed of 14 subunits. The complex is composed of a catalytic core of 3 subunits MT-CO1, MT-CO2 and MT-CO3, encoded in the mitochondrial DNA, and 11 supernumerary subunits COX4I, COX5A, COX5B, COX6A, COX6B, COX6C, COX7A, COX7B, COX7C, COX8 and NDUFA4, which are encoded in the nuclear genome. The complex exists as a monomer or a dimer and forms supercomplexes (SCs) in the inner mitochondrial membrane with NADH-ubiquinone oxidoreductase (complex I, CI) and ubiquinol-cytochrome c oxidoreductase (cytochrome b-c1 complex, complex III, CIII), resulting in different assemblies (supercomplex SCI(1)III(2)IV(1) and megacomplex MCI(2)III(2)IV(2)).</text>
</comment>
<comment type="subcellular location">
    <subcellularLocation>
        <location evidence="1">Mitochondrion inner membrane</location>
        <topology evidence="1">Single-pass membrane protein</topology>
    </subcellularLocation>
</comment>
<comment type="similarity">
    <text evidence="3">Belongs to the cytochrome c oxidase VIIb family.</text>
</comment>
<comment type="sequence caution" evidence="3">
    <conflict type="erroneous initiation">
        <sequence resource="EMBL-CDS" id="AAH35923"/>
    </conflict>
</comment>
<comment type="sequence caution" evidence="3">
    <conflict type="erroneous initiation">
        <sequence resource="EMBL-CDS" id="AAI07856"/>
    </conflict>
</comment>
<comment type="sequence caution" evidence="3">
    <conflict type="erroneous initiation">
        <sequence resource="EMBL-CDS" id="AAL75946"/>
    </conflict>
</comment>
<keyword id="KW-0472">Membrane</keyword>
<keyword id="KW-0496">Mitochondrion</keyword>
<keyword id="KW-0999">Mitochondrion inner membrane</keyword>
<keyword id="KW-1267">Proteomics identification</keyword>
<keyword id="KW-1185">Reference proteome</keyword>
<keyword id="KW-0809">Transit peptide</keyword>
<keyword id="KW-0812">Transmembrane</keyword>
<keyword id="KW-1133">Transmembrane helix</keyword>
<protein>
    <recommendedName>
        <fullName>Cytochrome c oxidase subunit 7B2, mitochondrial</fullName>
    </recommendedName>
    <alternativeName>
        <fullName>Cytochrome c oxidase polypeptide VIIb2</fullName>
    </alternativeName>
</protein>
<feature type="transit peptide" description="Mitochondrion" evidence="1">
    <location>
        <begin position="1"/>
        <end position="25"/>
    </location>
</feature>
<feature type="chain" id="PRO_0000006161" description="Cytochrome c oxidase subunit 7B2, mitochondrial">
    <location>
        <begin position="26"/>
        <end position="81"/>
    </location>
</feature>
<feature type="topological domain" description="Mitochondrial matrix" evidence="1">
    <location>
        <begin position="26"/>
        <end position="33"/>
    </location>
</feature>
<feature type="transmembrane region" description="Helical" evidence="1">
    <location>
        <begin position="34"/>
        <end position="60"/>
    </location>
</feature>
<feature type="topological domain" description="Mitochondrial intermembrane" evidence="1">
    <location>
        <begin position="61"/>
        <end position="81"/>
    </location>
</feature>
<feature type="sequence variant" id="VAR_026231" description="In dbSNP:rs201505906." evidence="2">
    <original>H</original>
    <variation>Q</variation>
    <location>
        <position position="27"/>
    </location>
</feature>
<sequence length="81" mass="9077">MMFPLARNALSSLKIQSILQSMARHSHVKHSPDFHDKYGNAVLASGTAFCVATWVFTATQIGIEWNLSPVGRVTPKEWKHQ</sequence>
<gene>
    <name type="primary">COX7B2</name>
</gene>
<name>CX7B2_HUMAN</name>